<name>KPRS1_STRP8</name>
<dbReference type="EC" id="2.7.6.1" evidence="1"/>
<dbReference type="EMBL" id="AE009949">
    <property type="protein sequence ID" value="AAL96850.1"/>
    <property type="molecule type" value="Genomic_DNA"/>
</dbReference>
<dbReference type="RefSeq" id="WP_002986722.1">
    <property type="nucleotide sequence ID" value="NC_003485.1"/>
</dbReference>
<dbReference type="SMR" id="P65245"/>
<dbReference type="KEGG" id="spm:spyM18_0021"/>
<dbReference type="HOGENOM" id="CLU_033546_4_0_9"/>
<dbReference type="UniPathway" id="UPA00087">
    <property type="reaction ID" value="UER00172"/>
</dbReference>
<dbReference type="GO" id="GO:0005737">
    <property type="term" value="C:cytoplasm"/>
    <property type="evidence" value="ECO:0007669"/>
    <property type="project" value="UniProtKB-SubCell"/>
</dbReference>
<dbReference type="GO" id="GO:0002189">
    <property type="term" value="C:ribose phosphate diphosphokinase complex"/>
    <property type="evidence" value="ECO:0007669"/>
    <property type="project" value="TreeGrafter"/>
</dbReference>
<dbReference type="GO" id="GO:0005524">
    <property type="term" value="F:ATP binding"/>
    <property type="evidence" value="ECO:0007669"/>
    <property type="project" value="UniProtKB-KW"/>
</dbReference>
<dbReference type="GO" id="GO:0016301">
    <property type="term" value="F:kinase activity"/>
    <property type="evidence" value="ECO:0007669"/>
    <property type="project" value="UniProtKB-KW"/>
</dbReference>
<dbReference type="GO" id="GO:0000287">
    <property type="term" value="F:magnesium ion binding"/>
    <property type="evidence" value="ECO:0007669"/>
    <property type="project" value="UniProtKB-UniRule"/>
</dbReference>
<dbReference type="GO" id="GO:0004749">
    <property type="term" value="F:ribose phosphate diphosphokinase activity"/>
    <property type="evidence" value="ECO:0007669"/>
    <property type="project" value="UniProtKB-UniRule"/>
</dbReference>
<dbReference type="GO" id="GO:0006015">
    <property type="term" value="P:5-phosphoribose 1-diphosphate biosynthetic process"/>
    <property type="evidence" value="ECO:0007669"/>
    <property type="project" value="UniProtKB-UniRule"/>
</dbReference>
<dbReference type="GO" id="GO:0006164">
    <property type="term" value="P:purine nucleotide biosynthetic process"/>
    <property type="evidence" value="ECO:0007669"/>
    <property type="project" value="TreeGrafter"/>
</dbReference>
<dbReference type="GO" id="GO:0009156">
    <property type="term" value="P:ribonucleoside monophosphate biosynthetic process"/>
    <property type="evidence" value="ECO:0007669"/>
    <property type="project" value="InterPro"/>
</dbReference>
<dbReference type="CDD" id="cd06223">
    <property type="entry name" value="PRTases_typeI"/>
    <property type="match status" value="1"/>
</dbReference>
<dbReference type="FunFam" id="3.40.50.2020:FF:000001">
    <property type="entry name" value="Ribose-phosphate pyrophosphokinase"/>
    <property type="match status" value="1"/>
</dbReference>
<dbReference type="Gene3D" id="3.40.50.2020">
    <property type="match status" value="2"/>
</dbReference>
<dbReference type="HAMAP" id="MF_00583_B">
    <property type="entry name" value="RibP_PPkinase_B"/>
    <property type="match status" value="1"/>
</dbReference>
<dbReference type="InterPro" id="IPR000842">
    <property type="entry name" value="PRib_PP_synth_CS"/>
</dbReference>
<dbReference type="InterPro" id="IPR029099">
    <property type="entry name" value="Pribosyltran_N"/>
</dbReference>
<dbReference type="InterPro" id="IPR000836">
    <property type="entry name" value="PRibTrfase_dom"/>
</dbReference>
<dbReference type="InterPro" id="IPR029057">
    <property type="entry name" value="PRTase-like"/>
</dbReference>
<dbReference type="InterPro" id="IPR005946">
    <property type="entry name" value="Rib-P_diPkinase"/>
</dbReference>
<dbReference type="InterPro" id="IPR037515">
    <property type="entry name" value="Rib-P_diPkinase_bac"/>
</dbReference>
<dbReference type="NCBIfam" id="NF002320">
    <property type="entry name" value="PRK01259.1"/>
    <property type="match status" value="1"/>
</dbReference>
<dbReference type="NCBIfam" id="NF002618">
    <property type="entry name" value="PRK02269.1"/>
    <property type="match status" value="1"/>
</dbReference>
<dbReference type="NCBIfam" id="TIGR01251">
    <property type="entry name" value="ribP_PPkin"/>
    <property type="match status" value="1"/>
</dbReference>
<dbReference type="PANTHER" id="PTHR10210">
    <property type="entry name" value="RIBOSE-PHOSPHATE DIPHOSPHOKINASE FAMILY MEMBER"/>
    <property type="match status" value="1"/>
</dbReference>
<dbReference type="PANTHER" id="PTHR10210:SF41">
    <property type="entry name" value="RIBOSE-PHOSPHATE PYROPHOSPHOKINASE 1, CHLOROPLASTIC"/>
    <property type="match status" value="1"/>
</dbReference>
<dbReference type="Pfam" id="PF14572">
    <property type="entry name" value="Pribosyl_synth"/>
    <property type="match status" value="1"/>
</dbReference>
<dbReference type="Pfam" id="PF13793">
    <property type="entry name" value="Pribosyltran_N"/>
    <property type="match status" value="1"/>
</dbReference>
<dbReference type="SMART" id="SM01400">
    <property type="entry name" value="Pribosyltran_N"/>
    <property type="match status" value="1"/>
</dbReference>
<dbReference type="SUPFAM" id="SSF53271">
    <property type="entry name" value="PRTase-like"/>
    <property type="match status" value="1"/>
</dbReference>
<dbReference type="PROSITE" id="PS00114">
    <property type="entry name" value="PRPP_SYNTHASE"/>
    <property type="match status" value="1"/>
</dbReference>
<accession>P65245</accession>
<accession>Q9A1Z7</accession>
<protein>
    <recommendedName>
        <fullName evidence="1">Ribose-phosphate pyrophosphokinase 1</fullName>
        <shortName evidence="1">RPPK 1</shortName>
        <ecNumber evidence="1">2.7.6.1</ecNumber>
    </recommendedName>
    <alternativeName>
        <fullName evidence="1">5-phospho-D-ribosyl alpha-1-diphosphate synthase 1</fullName>
    </alternativeName>
    <alternativeName>
        <fullName evidence="1">Phosphoribosyl diphosphate synthase 1</fullName>
    </alternativeName>
    <alternativeName>
        <fullName evidence="1">Phosphoribosyl pyrophosphate synthase 1</fullName>
        <shortName evidence="1">P-Rib-PP synthase 1</shortName>
        <shortName evidence="1">PRPP synthase 1</shortName>
        <shortName evidence="1">PRPPase 1</shortName>
    </alternativeName>
</protein>
<proteinExistence type="inferred from homology"/>
<organism>
    <name type="scientific">Streptococcus pyogenes serotype M18 (strain MGAS8232)</name>
    <dbReference type="NCBI Taxonomy" id="186103"/>
    <lineage>
        <taxon>Bacteria</taxon>
        <taxon>Bacillati</taxon>
        <taxon>Bacillota</taxon>
        <taxon>Bacilli</taxon>
        <taxon>Lactobacillales</taxon>
        <taxon>Streptococcaceae</taxon>
        <taxon>Streptococcus</taxon>
    </lineage>
</organism>
<reference key="1">
    <citation type="journal article" date="2002" name="Proc. Natl. Acad. Sci. U.S.A.">
        <title>Genome sequence and comparative microarray analysis of serotype M18 group A Streptococcus strains associated with acute rheumatic fever outbreaks.</title>
        <authorList>
            <person name="Smoot J.C."/>
            <person name="Barbian K.D."/>
            <person name="Van Gompel J.J."/>
            <person name="Smoot L.M."/>
            <person name="Chaussee M.S."/>
            <person name="Sylva G.L."/>
            <person name="Sturdevant D.E."/>
            <person name="Ricklefs S.M."/>
            <person name="Porcella S.F."/>
            <person name="Parkins L.D."/>
            <person name="Beres S.B."/>
            <person name="Campbell D.S."/>
            <person name="Smith T.M."/>
            <person name="Zhang Q."/>
            <person name="Kapur V."/>
            <person name="Daly J.A."/>
            <person name="Veasy L.G."/>
            <person name="Musser J.M."/>
        </authorList>
    </citation>
    <scope>NUCLEOTIDE SEQUENCE [LARGE SCALE GENOMIC DNA]</scope>
    <source>
        <strain>MGAS8232</strain>
    </source>
</reference>
<comment type="function">
    <text evidence="1">Involved in the biosynthesis of the central metabolite phospho-alpha-D-ribosyl-1-pyrophosphate (PRPP) via the transfer of pyrophosphoryl group from ATP to 1-hydroxyl of ribose-5-phosphate (Rib-5-P).</text>
</comment>
<comment type="catalytic activity">
    <reaction evidence="1">
        <text>D-ribose 5-phosphate + ATP = 5-phospho-alpha-D-ribose 1-diphosphate + AMP + H(+)</text>
        <dbReference type="Rhea" id="RHEA:15609"/>
        <dbReference type="ChEBI" id="CHEBI:15378"/>
        <dbReference type="ChEBI" id="CHEBI:30616"/>
        <dbReference type="ChEBI" id="CHEBI:58017"/>
        <dbReference type="ChEBI" id="CHEBI:78346"/>
        <dbReference type="ChEBI" id="CHEBI:456215"/>
        <dbReference type="EC" id="2.7.6.1"/>
    </reaction>
</comment>
<comment type="cofactor">
    <cofactor evidence="1">
        <name>Mg(2+)</name>
        <dbReference type="ChEBI" id="CHEBI:18420"/>
    </cofactor>
    <text evidence="1">Binds 2 Mg(2+) ions per subunit.</text>
</comment>
<comment type="pathway">
    <text evidence="1">Metabolic intermediate biosynthesis; 5-phospho-alpha-D-ribose 1-diphosphate biosynthesis; 5-phospho-alpha-D-ribose 1-diphosphate from D-ribose 5-phosphate (route I): step 1/1.</text>
</comment>
<comment type="subunit">
    <text evidence="1">Homohexamer.</text>
</comment>
<comment type="subcellular location">
    <subcellularLocation>
        <location evidence="1">Cytoplasm</location>
    </subcellularLocation>
</comment>
<comment type="similarity">
    <text evidence="1">Belongs to the ribose-phosphate pyrophosphokinase family. Class I subfamily.</text>
</comment>
<keyword id="KW-0067">ATP-binding</keyword>
<keyword id="KW-0963">Cytoplasm</keyword>
<keyword id="KW-0418">Kinase</keyword>
<keyword id="KW-0460">Magnesium</keyword>
<keyword id="KW-0479">Metal-binding</keyword>
<keyword id="KW-0545">Nucleotide biosynthesis</keyword>
<keyword id="KW-0547">Nucleotide-binding</keyword>
<keyword id="KW-0808">Transferase</keyword>
<feature type="chain" id="PRO_0000141214" description="Ribose-phosphate pyrophosphokinase 1">
    <location>
        <begin position="1"/>
        <end position="320"/>
    </location>
</feature>
<feature type="active site" evidence="1">
    <location>
        <position position="196"/>
    </location>
</feature>
<feature type="binding site" evidence="1">
    <location>
        <begin position="39"/>
        <end position="41"/>
    </location>
    <ligand>
        <name>ATP</name>
        <dbReference type="ChEBI" id="CHEBI:30616"/>
    </ligand>
</feature>
<feature type="binding site" evidence="1">
    <location>
        <begin position="98"/>
        <end position="99"/>
    </location>
    <ligand>
        <name>ATP</name>
        <dbReference type="ChEBI" id="CHEBI:30616"/>
    </ligand>
</feature>
<feature type="binding site" evidence="1">
    <location>
        <position position="132"/>
    </location>
    <ligand>
        <name>Mg(2+)</name>
        <dbReference type="ChEBI" id="CHEBI:18420"/>
        <label>1</label>
    </ligand>
</feature>
<feature type="binding site" evidence="1">
    <location>
        <position position="173"/>
    </location>
    <ligand>
        <name>Mg(2+)</name>
        <dbReference type="ChEBI" id="CHEBI:18420"/>
        <label>2</label>
    </ligand>
</feature>
<feature type="binding site" evidence="1">
    <location>
        <position position="198"/>
    </location>
    <ligand>
        <name>D-ribose 5-phosphate</name>
        <dbReference type="ChEBI" id="CHEBI:78346"/>
    </ligand>
</feature>
<feature type="binding site" evidence="1">
    <location>
        <position position="224"/>
    </location>
    <ligand>
        <name>D-ribose 5-phosphate</name>
        <dbReference type="ChEBI" id="CHEBI:78346"/>
    </ligand>
</feature>
<feature type="binding site" evidence="1">
    <location>
        <begin position="228"/>
        <end position="232"/>
    </location>
    <ligand>
        <name>D-ribose 5-phosphate</name>
        <dbReference type="ChEBI" id="CHEBI:78346"/>
    </ligand>
</feature>
<evidence type="ECO:0000255" key="1">
    <source>
        <dbReference type="HAMAP-Rule" id="MF_00583"/>
    </source>
</evidence>
<gene>
    <name evidence="1" type="primary">prs1</name>
    <name type="synonym">prsA</name>
    <name type="synonym">prsA.1</name>
    <name type="ordered locus">spyM18_0021</name>
</gene>
<sequence length="320" mass="35044">MSYSDLKLFALSSNKELAEKVASAMGIQLGKSTVRQFSDGEIQVNIEESIRGHHVFILQSTSSPVNDNLMEILIMVDALKRASAEKISVVMPYYGYARQDRKARSREPITSKLVANMLEVAGVDRLLTVDLHAAQIQGFFDIPVDHLMGAPLIADYFDRHGLVGEDVVVVSPDHGGVTRARKLAQFLQTPIAIIDKRRSVDKMNTSEVMNIIGNVSGKKCILIDDMIDTAGTICHAADALAEAGATAVYASCTHPVLSGPALDNIQRSAIEKLIVLDTIYLPKERLIDKIEQISIADLVAEAIIRIHEKRPLSPLFEMGN</sequence>